<reference key="1">
    <citation type="journal article" date="2005" name="Nature">
        <title>The genome of the social amoeba Dictyostelium discoideum.</title>
        <authorList>
            <person name="Eichinger L."/>
            <person name="Pachebat J.A."/>
            <person name="Gloeckner G."/>
            <person name="Rajandream M.A."/>
            <person name="Sucgang R."/>
            <person name="Berriman M."/>
            <person name="Song J."/>
            <person name="Olsen R."/>
            <person name="Szafranski K."/>
            <person name="Xu Q."/>
            <person name="Tunggal B."/>
            <person name="Kummerfeld S."/>
            <person name="Madera M."/>
            <person name="Konfortov B.A."/>
            <person name="Rivero F."/>
            <person name="Bankier A.T."/>
            <person name="Lehmann R."/>
            <person name="Hamlin N."/>
            <person name="Davies R."/>
            <person name="Gaudet P."/>
            <person name="Fey P."/>
            <person name="Pilcher K."/>
            <person name="Chen G."/>
            <person name="Saunders D."/>
            <person name="Sodergren E.J."/>
            <person name="Davis P."/>
            <person name="Kerhornou A."/>
            <person name="Nie X."/>
            <person name="Hall N."/>
            <person name="Anjard C."/>
            <person name="Hemphill L."/>
            <person name="Bason N."/>
            <person name="Farbrother P."/>
            <person name="Desany B."/>
            <person name="Just E."/>
            <person name="Morio T."/>
            <person name="Rost R."/>
            <person name="Churcher C.M."/>
            <person name="Cooper J."/>
            <person name="Haydock S."/>
            <person name="van Driessche N."/>
            <person name="Cronin A."/>
            <person name="Goodhead I."/>
            <person name="Muzny D.M."/>
            <person name="Mourier T."/>
            <person name="Pain A."/>
            <person name="Lu M."/>
            <person name="Harper D."/>
            <person name="Lindsay R."/>
            <person name="Hauser H."/>
            <person name="James K.D."/>
            <person name="Quiles M."/>
            <person name="Madan Babu M."/>
            <person name="Saito T."/>
            <person name="Buchrieser C."/>
            <person name="Wardroper A."/>
            <person name="Felder M."/>
            <person name="Thangavelu M."/>
            <person name="Johnson D."/>
            <person name="Knights A."/>
            <person name="Loulseged H."/>
            <person name="Mungall K.L."/>
            <person name="Oliver K."/>
            <person name="Price C."/>
            <person name="Quail M.A."/>
            <person name="Urushihara H."/>
            <person name="Hernandez J."/>
            <person name="Rabbinowitsch E."/>
            <person name="Steffen D."/>
            <person name="Sanders M."/>
            <person name="Ma J."/>
            <person name="Kohara Y."/>
            <person name="Sharp S."/>
            <person name="Simmonds M.N."/>
            <person name="Spiegler S."/>
            <person name="Tivey A."/>
            <person name="Sugano S."/>
            <person name="White B."/>
            <person name="Walker D."/>
            <person name="Woodward J.R."/>
            <person name="Winckler T."/>
            <person name="Tanaka Y."/>
            <person name="Shaulsky G."/>
            <person name="Schleicher M."/>
            <person name="Weinstock G.M."/>
            <person name="Rosenthal A."/>
            <person name="Cox E.C."/>
            <person name="Chisholm R.L."/>
            <person name="Gibbs R.A."/>
            <person name="Loomis W.F."/>
            <person name="Platzer M."/>
            <person name="Kay R.R."/>
            <person name="Williams J.G."/>
            <person name="Dear P.H."/>
            <person name="Noegel A.A."/>
            <person name="Barrell B.G."/>
            <person name="Kuspa A."/>
        </authorList>
    </citation>
    <scope>NUCLEOTIDE SEQUENCE [LARGE SCALE GENOMIC DNA]</scope>
    <source>
        <strain>AX4</strain>
    </source>
</reference>
<protein>
    <recommendedName>
        <fullName>TIP41-like protein</fullName>
    </recommendedName>
</protein>
<proteinExistence type="inferred from homology"/>
<gene>
    <name type="primary">tiprl</name>
    <name type="ORF">DDB_G0285919</name>
</gene>
<evidence type="ECO:0000305" key="1"/>
<keyword id="KW-1185">Reference proteome</keyword>
<dbReference type="EMBL" id="AAFI02000082">
    <property type="protein sequence ID" value="EAL64494.1"/>
    <property type="molecule type" value="Genomic_DNA"/>
</dbReference>
<dbReference type="RefSeq" id="XP_638004.1">
    <property type="nucleotide sequence ID" value="XM_632912.1"/>
</dbReference>
<dbReference type="SMR" id="Q54MI6"/>
<dbReference type="FunCoup" id="Q54MI6">
    <property type="interactions" value="730"/>
</dbReference>
<dbReference type="STRING" id="44689.Q54MI6"/>
<dbReference type="PaxDb" id="44689-DDB0186748"/>
<dbReference type="EnsemblProtists" id="EAL64494">
    <property type="protein sequence ID" value="EAL64494"/>
    <property type="gene ID" value="DDB_G0285919"/>
</dbReference>
<dbReference type="GeneID" id="8625355"/>
<dbReference type="KEGG" id="ddi:DDB_G0285919"/>
<dbReference type="dictyBase" id="DDB_G0285919"/>
<dbReference type="VEuPathDB" id="AmoebaDB:DDB_G0285919"/>
<dbReference type="eggNOG" id="KOG3224">
    <property type="taxonomic scope" value="Eukaryota"/>
</dbReference>
<dbReference type="HOGENOM" id="CLU_039187_0_1_1"/>
<dbReference type="InParanoid" id="Q54MI6"/>
<dbReference type="OMA" id="DMILFED"/>
<dbReference type="PhylomeDB" id="Q54MI6"/>
<dbReference type="PRO" id="PR:Q54MI6"/>
<dbReference type="Proteomes" id="UP000002195">
    <property type="component" value="Chromosome 4"/>
</dbReference>
<dbReference type="GO" id="GO:0005829">
    <property type="term" value="C:cytosol"/>
    <property type="evidence" value="ECO:0000318"/>
    <property type="project" value="GO_Central"/>
</dbReference>
<dbReference type="GO" id="GO:0072542">
    <property type="term" value="F:protein phosphatase activator activity"/>
    <property type="evidence" value="ECO:0000318"/>
    <property type="project" value="GO_Central"/>
</dbReference>
<dbReference type="GO" id="GO:0031929">
    <property type="term" value="P:TOR signaling"/>
    <property type="evidence" value="ECO:0000318"/>
    <property type="project" value="GO_Central"/>
</dbReference>
<dbReference type="InterPro" id="IPR051330">
    <property type="entry name" value="Phosphatase_reg/MetRdx"/>
</dbReference>
<dbReference type="InterPro" id="IPR007303">
    <property type="entry name" value="TIP41-like"/>
</dbReference>
<dbReference type="PANTHER" id="PTHR21021">
    <property type="entry name" value="GAF/PUTATIVE CYTOSKELETAL PROTEIN"/>
    <property type="match status" value="1"/>
</dbReference>
<dbReference type="PANTHER" id="PTHR21021:SF16">
    <property type="entry name" value="TIP41-LIKE PROTEIN"/>
    <property type="match status" value="1"/>
</dbReference>
<dbReference type="Pfam" id="PF04176">
    <property type="entry name" value="TIP41"/>
    <property type="match status" value="1"/>
</dbReference>
<accession>Q54MI6</accession>
<feature type="chain" id="PRO_0000330915" description="TIP41-like protein">
    <location>
        <begin position="1"/>
        <end position="274"/>
    </location>
</feature>
<sequence length="274" mass="31752">MTTTINTPHKLIKNGIEIGDWVIHTSKNPILKSTEKEEWEKELVLNGLPEMVYGNNFIRLSNEKRDITIVFNCMDALKMLDKVADQSIKVSSSKKWEEINKGFEGQIEKSFEWTFSSPYTGTILTRGHCYSNFEKPIGLFENTTEKIDIEKLKRPDPILFFDDVLLYEDELADNGSSMLSVKIRVNNESVFLLSRFFLRVDDVICRCLDTRIYHEFGKDYLLKEVTFKESSFDIIKPYSENDPTLLTDSNFIVSKLPIKSLTTEKILLSYNDNK</sequence>
<comment type="similarity">
    <text evidence="1">Belongs to the TIP41 family.</text>
</comment>
<name>TIPRL_DICDI</name>
<organism>
    <name type="scientific">Dictyostelium discoideum</name>
    <name type="common">Social amoeba</name>
    <dbReference type="NCBI Taxonomy" id="44689"/>
    <lineage>
        <taxon>Eukaryota</taxon>
        <taxon>Amoebozoa</taxon>
        <taxon>Evosea</taxon>
        <taxon>Eumycetozoa</taxon>
        <taxon>Dictyostelia</taxon>
        <taxon>Dictyosteliales</taxon>
        <taxon>Dictyosteliaceae</taxon>
        <taxon>Dictyostelium</taxon>
    </lineage>
</organism>